<sequence>MLEKFERYPLTFGPTPIERLGRLSAHLGGQVELYAKREDCNSGLAFGGNKLRKLEYIVPDAIASGADTLVSIGGVQSNHTRMVAAVAAKIGMKCRLVQEAWVPHEDAVYDRVGNIMLSRILGADVRLVDDGFDIGIRSSWQEAIDDVKAKGGRPYAIPAGASVHKFGGLGYVGFAEEVRAQERDLGFTFDYIVVCTVTGSTHAGMVVGFAKDGRERRVIGIDASATPAQTKAQVLDIARRTADLVGLGRDLSADDVVLNEDYAYPVYGVPSQETKDAIRLCARLEGMITDPVYEGKSMQGMIDLVRKGFFPAGSKVLYAHLGGAPALNGYGYTFRNG</sequence>
<name>1A1D_METNO</name>
<protein>
    <recommendedName>
        <fullName evidence="1">1-aminocyclopropane-1-carboxylate deaminase</fullName>
        <shortName evidence="1">ACC deaminase</shortName>
        <shortName evidence="1">ACCD</shortName>
        <ecNumber evidence="1">3.5.99.7</ecNumber>
    </recommendedName>
</protein>
<organism>
    <name type="scientific">Methylobacterium nodulans (strain LMG 21967 / CNCM I-2342 / ORS 2060)</name>
    <dbReference type="NCBI Taxonomy" id="460265"/>
    <lineage>
        <taxon>Bacteria</taxon>
        <taxon>Pseudomonadati</taxon>
        <taxon>Pseudomonadota</taxon>
        <taxon>Alphaproteobacteria</taxon>
        <taxon>Hyphomicrobiales</taxon>
        <taxon>Methylobacteriaceae</taxon>
        <taxon>Methylobacterium</taxon>
    </lineage>
</organism>
<accession>B8IP05</accession>
<keyword id="KW-0378">Hydrolase</keyword>
<keyword id="KW-0663">Pyridoxal phosphate</keyword>
<keyword id="KW-1185">Reference proteome</keyword>
<dbReference type="EC" id="3.5.99.7" evidence="1"/>
<dbReference type="EMBL" id="CP001349">
    <property type="protein sequence ID" value="ACL60323.1"/>
    <property type="molecule type" value="Genomic_DNA"/>
</dbReference>
<dbReference type="RefSeq" id="WP_015931930.1">
    <property type="nucleotide sequence ID" value="NC_011894.1"/>
</dbReference>
<dbReference type="SMR" id="B8IP05"/>
<dbReference type="STRING" id="460265.Mnod_5479"/>
<dbReference type="KEGG" id="mno:Mnod_5479"/>
<dbReference type="eggNOG" id="COG2515">
    <property type="taxonomic scope" value="Bacteria"/>
</dbReference>
<dbReference type="HOGENOM" id="CLU_048897_2_1_5"/>
<dbReference type="OrthoDB" id="9801249at2"/>
<dbReference type="BRENDA" id="3.5.99.7">
    <property type="organism ID" value="13283"/>
</dbReference>
<dbReference type="Proteomes" id="UP000008207">
    <property type="component" value="Chromosome"/>
</dbReference>
<dbReference type="GO" id="GO:0008660">
    <property type="term" value="F:1-aminocyclopropane-1-carboxylate deaminase activity"/>
    <property type="evidence" value="ECO:0007669"/>
    <property type="project" value="UniProtKB-UniRule"/>
</dbReference>
<dbReference type="GO" id="GO:0019148">
    <property type="term" value="F:D-cysteine desulfhydrase activity"/>
    <property type="evidence" value="ECO:0007669"/>
    <property type="project" value="TreeGrafter"/>
</dbReference>
<dbReference type="GO" id="GO:0030170">
    <property type="term" value="F:pyridoxal phosphate binding"/>
    <property type="evidence" value="ECO:0007669"/>
    <property type="project" value="InterPro"/>
</dbReference>
<dbReference type="GO" id="GO:0018871">
    <property type="term" value="P:1-aminocyclopropane-1-carboxylate metabolic process"/>
    <property type="evidence" value="ECO:0007669"/>
    <property type="project" value="UniProtKB-UniRule"/>
</dbReference>
<dbReference type="GO" id="GO:0009310">
    <property type="term" value="P:amine catabolic process"/>
    <property type="evidence" value="ECO:0007669"/>
    <property type="project" value="InterPro"/>
</dbReference>
<dbReference type="CDD" id="cd06449">
    <property type="entry name" value="ACCD"/>
    <property type="match status" value="1"/>
</dbReference>
<dbReference type="FunFam" id="3.40.50.1100:FF:000048">
    <property type="entry name" value="1-aminocyclopropane-1-carboxylate deaminase"/>
    <property type="match status" value="1"/>
</dbReference>
<dbReference type="Gene3D" id="3.40.50.1100">
    <property type="match status" value="2"/>
</dbReference>
<dbReference type="HAMAP" id="MF_00807">
    <property type="entry name" value="ACC_deaminase"/>
    <property type="match status" value="1"/>
</dbReference>
<dbReference type="InterPro" id="IPR027278">
    <property type="entry name" value="ACCD_DCysDesulf"/>
</dbReference>
<dbReference type="InterPro" id="IPR005965">
    <property type="entry name" value="ACP_carboxylate_deaminase"/>
</dbReference>
<dbReference type="InterPro" id="IPR020601">
    <property type="entry name" value="ACP_carboxylate_deaminase_bac"/>
</dbReference>
<dbReference type="InterPro" id="IPR001926">
    <property type="entry name" value="TrpB-like_PALP"/>
</dbReference>
<dbReference type="InterPro" id="IPR036052">
    <property type="entry name" value="TrpB-like_PALP_sf"/>
</dbReference>
<dbReference type="NCBIfam" id="TIGR01274">
    <property type="entry name" value="ACC_deam"/>
    <property type="match status" value="1"/>
</dbReference>
<dbReference type="PANTHER" id="PTHR43780">
    <property type="entry name" value="1-AMINOCYCLOPROPANE-1-CARBOXYLATE DEAMINASE-RELATED"/>
    <property type="match status" value="1"/>
</dbReference>
<dbReference type="PANTHER" id="PTHR43780:SF2">
    <property type="entry name" value="1-AMINOCYCLOPROPANE-1-CARBOXYLATE DEAMINASE-RELATED"/>
    <property type="match status" value="1"/>
</dbReference>
<dbReference type="Pfam" id="PF00291">
    <property type="entry name" value="PALP"/>
    <property type="match status" value="1"/>
</dbReference>
<dbReference type="PIRSF" id="PIRSF006278">
    <property type="entry name" value="ACCD_DCysDesulf"/>
    <property type="match status" value="1"/>
</dbReference>
<dbReference type="SUPFAM" id="SSF53686">
    <property type="entry name" value="Tryptophan synthase beta subunit-like PLP-dependent enzymes"/>
    <property type="match status" value="1"/>
</dbReference>
<proteinExistence type="inferred from homology"/>
<comment type="function">
    <text evidence="1">Catalyzes a cyclopropane ring-opening reaction, the irreversible conversion of 1-aminocyclopropane-1-carboxylate (ACC) to ammonia and alpha-ketobutyrate. Allows growth on ACC as a nitrogen source.</text>
</comment>
<comment type="catalytic activity">
    <reaction evidence="1">
        <text>1-aminocyclopropane-1-carboxylate + H2O = 2-oxobutanoate + NH4(+)</text>
        <dbReference type="Rhea" id="RHEA:16933"/>
        <dbReference type="ChEBI" id="CHEBI:15377"/>
        <dbReference type="ChEBI" id="CHEBI:16763"/>
        <dbReference type="ChEBI" id="CHEBI:28938"/>
        <dbReference type="ChEBI" id="CHEBI:58360"/>
        <dbReference type="EC" id="3.5.99.7"/>
    </reaction>
</comment>
<comment type="cofactor">
    <cofactor evidence="1">
        <name>pyridoxal 5'-phosphate</name>
        <dbReference type="ChEBI" id="CHEBI:597326"/>
    </cofactor>
</comment>
<comment type="subunit">
    <text evidence="1">Homotrimer.</text>
</comment>
<comment type="similarity">
    <text evidence="1">Belongs to the ACC deaminase/D-cysteine desulfhydrase family.</text>
</comment>
<gene>
    <name evidence="1" type="primary">acdS</name>
    <name type="ordered locus">Mnod_5479</name>
</gene>
<evidence type="ECO:0000255" key="1">
    <source>
        <dbReference type="HAMAP-Rule" id="MF_00807"/>
    </source>
</evidence>
<feature type="chain" id="PRO_1000148577" description="1-aminocyclopropane-1-carboxylate deaminase">
    <location>
        <begin position="1"/>
        <end position="337"/>
    </location>
</feature>
<feature type="active site" description="Nucleophile" evidence="1">
    <location>
        <position position="77"/>
    </location>
</feature>
<feature type="modified residue" description="N6-(pyridoxal phosphate)lysine" evidence="1">
    <location>
        <position position="50"/>
    </location>
</feature>
<reference key="1">
    <citation type="submission" date="2009-01" db="EMBL/GenBank/DDBJ databases">
        <title>Complete sequence of chromosome of Methylobacterium nodulans ORS 2060.</title>
        <authorList>
            <consortium name="US DOE Joint Genome Institute"/>
            <person name="Lucas S."/>
            <person name="Copeland A."/>
            <person name="Lapidus A."/>
            <person name="Glavina del Rio T."/>
            <person name="Dalin E."/>
            <person name="Tice H."/>
            <person name="Bruce D."/>
            <person name="Goodwin L."/>
            <person name="Pitluck S."/>
            <person name="Sims D."/>
            <person name="Brettin T."/>
            <person name="Detter J.C."/>
            <person name="Han C."/>
            <person name="Larimer F."/>
            <person name="Land M."/>
            <person name="Hauser L."/>
            <person name="Kyrpides N."/>
            <person name="Ivanova N."/>
            <person name="Marx C.J."/>
            <person name="Richardson P."/>
        </authorList>
    </citation>
    <scope>NUCLEOTIDE SEQUENCE [LARGE SCALE GENOMIC DNA]</scope>
    <source>
        <strain>LMG 21967 / CNCM I-2342 / ORS 2060</strain>
    </source>
</reference>